<reference key="1">
    <citation type="journal article" date="2000" name="Proc. Natl. Acad. Sci. U.S.A.">
        <title>Genome sequence of Halobacterium species NRC-1.</title>
        <authorList>
            <person name="Ng W.V."/>
            <person name="Kennedy S.P."/>
            <person name="Mahairas G.G."/>
            <person name="Berquist B."/>
            <person name="Pan M."/>
            <person name="Shukla H.D."/>
            <person name="Lasky S.R."/>
            <person name="Baliga N.S."/>
            <person name="Thorsson V."/>
            <person name="Sbrogna J."/>
            <person name="Swartzell S."/>
            <person name="Weir D."/>
            <person name="Hall J."/>
            <person name="Dahl T.A."/>
            <person name="Welti R."/>
            <person name="Goo Y.A."/>
            <person name="Leithauser B."/>
            <person name="Keller K."/>
            <person name="Cruz R."/>
            <person name="Danson M.J."/>
            <person name="Hough D.W."/>
            <person name="Maddocks D.G."/>
            <person name="Jablonski P.E."/>
            <person name="Krebs M.P."/>
            <person name="Angevine C.M."/>
            <person name="Dale H."/>
            <person name="Isenbarger T.A."/>
            <person name="Peck R.F."/>
            <person name="Pohlschroder M."/>
            <person name="Spudich J.L."/>
            <person name="Jung K.-H."/>
            <person name="Alam M."/>
            <person name="Freitas T."/>
            <person name="Hou S."/>
            <person name="Daniels C.J."/>
            <person name="Dennis P.P."/>
            <person name="Omer A.D."/>
            <person name="Ebhardt H."/>
            <person name="Lowe T.M."/>
            <person name="Liang P."/>
            <person name="Riley M."/>
            <person name="Hood L."/>
            <person name="DasSarma S."/>
        </authorList>
    </citation>
    <scope>NUCLEOTIDE SEQUENCE [LARGE SCALE GENOMIC DNA]</scope>
    <source>
        <strain>ATCC 700922 / JCM 11081 / NRC-1</strain>
    </source>
</reference>
<keyword id="KW-0067">ATP-binding</keyword>
<keyword id="KW-0418">Kinase</keyword>
<keyword id="KW-0545">Nucleotide biosynthesis</keyword>
<keyword id="KW-0547">Nucleotide-binding</keyword>
<keyword id="KW-1185">Reference proteome</keyword>
<keyword id="KW-0808">Transferase</keyword>
<comment type="catalytic activity">
    <reaction>
        <text>dTMP + ATP = dTDP + ADP</text>
        <dbReference type="Rhea" id="RHEA:13517"/>
        <dbReference type="ChEBI" id="CHEBI:30616"/>
        <dbReference type="ChEBI" id="CHEBI:58369"/>
        <dbReference type="ChEBI" id="CHEBI:63528"/>
        <dbReference type="ChEBI" id="CHEBI:456216"/>
        <dbReference type="EC" id="2.7.4.9"/>
    </reaction>
</comment>
<comment type="similarity">
    <text evidence="2">Belongs to the thymidylate kinase family.</text>
</comment>
<dbReference type="EC" id="2.7.4.9"/>
<dbReference type="EMBL" id="AE004437">
    <property type="protein sequence ID" value="AAG20116.1"/>
    <property type="molecule type" value="Genomic_DNA"/>
</dbReference>
<dbReference type="PIR" id="H84343">
    <property type="entry name" value="H84343"/>
</dbReference>
<dbReference type="RefSeq" id="WP_010903416.1">
    <property type="nucleotide sequence ID" value="NC_002607.1"/>
</dbReference>
<dbReference type="SMR" id="Q9HNV4"/>
<dbReference type="FunCoup" id="Q9HNV4">
    <property type="interactions" value="129"/>
</dbReference>
<dbReference type="STRING" id="64091.VNG_1929G"/>
<dbReference type="PaxDb" id="64091-VNG_1929G"/>
<dbReference type="GeneID" id="89350127"/>
<dbReference type="KEGG" id="hal:VNG_1929G"/>
<dbReference type="PATRIC" id="fig|64091.14.peg.1475"/>
<dbReference type="HOGENOM" id="CLU_049131_0_2_2"/>
<dbReference type="InParanoid" id="Q9HNV4"/>
<dbReference type="OrthoDB" id="43083at2157"/>
<dbReference type="PhylomeDB" id="Q9HNV4"/>
<dbReference type="Proteomes" id="UP000000554">
    <property type="component" value="Chromosome"/>
</dbReference>
<dbReference type="GO" id="GO:0005737">
    <property type="term" value="C:cytoplasm"/>
    <property type="evidence" value="ECO:0000318"/>
    <property type="project" value="GO_Central"/>
</dbReference>
<dbReference type="GO" id="GO:0005524">
    <property type="term" value="F:ATP binding"/>
    <property type="evidence" value="ECO:0007669"/>
    <property type="project" value="UniProtKB-UniRule"/>
</dbReference>
<dbReference type="GO" id="GO:0004798">
    <property type="term" value="F:dTMP kinase activity"/>
    <property type="evidence" value="ECO:0000318"/>
    <property type="project" value="GO_Central"/>
</dbReference>
<dbReference type="GO" id="GO:0006233">
    <property type="term" value="P:dTDP biosynthetic process"/>
    <property type="evidence" value="ECO:0000318"/>
    <property type="project" value="GO_Central"/>
</dbReference>
<dbReference type="GO" id="GO:0006235">
    <property type="term" value="P:dTTP biosynthetic process"/>
    <property type="evidence" value="ECO:0000318"/>
    <property type="project" value="GO_Central"/>
</dbReference>
<dbReference type="GO" id="GO:0006227">
    <property type="term" value="P:dUDP biosynthetic process"/>
    <property type="evidence" value="ECO:0000318"/>
    <property type="project" value="GO_Central"/>
</dbReference>
<dbReference type="CDD" id="cd01672">
    <property type="entry name" value="TMPK"/>
    <property type="match status" value="1"/>
</dbReference>
<dbReference type="Gene3D" id="3.40.50.300">
    <property type="entry name" value="P-loop containing nucleotide triphosphate hydrolases"/>
    <property type="match status" value="1"/>
</dbReference>
<dbReference type="HAMAP" id="MF_00165">
    <property type="entry name" value="Thymidylate_kinase"/>
    <property type="match status" value="1"/>
</dbReference>
<dbReference type="InterPro" id="IPR027417">
    <property type="entry name" value="P-loop_NTPase"/>
</dbReference>
<dbReference type="InterPro" id="IPR039430">
    <property type="entry name" value="Thymidylate_kin-like_dom"/>
</dbReference>
<dbReference type="InterPro" id="IPR018094">
    <property type="entry name" value="Thymidylate_kinase"/>
</dbReference>
<dbReference type="NCBIfam" id="TIGR00041">
    <property type="entry name" value="DTMP_kinase"/>
    <property type="match status" value="1"/>
</dbReference>
<dbReference type="PANTHER" id="PTHR10344">
    <property type="entry name" value="THYMIDYLATE KINASE"/>
    <property type="match status" value="1"/>
</dbReference>
<dbReference type="PANTHER" id="PTHR10344:SF4">
    <property type="entry name" value="UMP-CMP KINASE 2, MITOCHONDRIAL"/>
    <property type="match status" value="1"/>
</dbReference>
<dbReference type="Pfam" id="PF02223">
    <property type="entry name" value="Thymidylate_kin"/>
    <property type="match status" value="1"/>
</dbReference>
<dbReference type="SUPFAM" id="SSF52540">
    <property type="entry name" value="P-loop containing nucleoside triphosphate hydrolases"/>
    <property type="match status" value="1"/>
</dbReference>
<organism>
    <name type="scientific">Halobacterium salinarum (strain ATCC 700922 / JCM 11081 / NRC-1)</name>
    <name type="common">Halobacterium halobium</name>
    <dbReference type="NCBI Taxonomy" id="64091"/>
    <lineage>
        <taxon>Archaea</taxon>
        <taxon>Methanobacteriati</taxon>
        <taxon>Methanobacteriota</taxon>
        <taxon>Stenosarchaea group</taxon>
        <taxon>Halobacteria</taxon>
        <taxon>Halobacteriales</taxon>
        <taxon>Halobacteriaceae</taxon>
        <taxon>Halobacterium</taxon>
        <taxon>Halobacterium salinarum NRC-34001</taxon>
    </lineage>
</organism>
<evidence type="ECO:0000255" key="1"/>
<evidence type="ECO:0000305" key="2"/>
<name>KTHY_HALSA</name>
<sequence>MLVTLEGLDGSGKTTVWESLRASHDDGVTFTAEPTDSQYGQAVRRSESAADADPIAELFLFTADHADHLSRVVSPALDRGDVVISDRYSDSRYAYQGATLADTVPRAMEYVRGIHQPWTRPPDVTLYFDVDPDTGAARSGATNKFETAAFLADVRANYEQLIDYTPERFVRIDATQSPEAVIADAEAALADALPDDAWA</sequence>
<gene>
    <name type="primary">tmk</name>
    <name type="ordered locus">VNG_1929G</name>
</gene>
<proteinExistence type="inferred from homology"/>
<accession>Q9HNV4</accession>
<feature type="chain" id="PRO_0000155384" description="Probable thymidylate kinase">
    <location>
        <begin position="1"/>
        <end position="199"/>
    </location>
</feature>
<feature type="binding site" evidence="1">
    <location>
        <begin position="7"/>
        <end position="14"/>
    </location>
    <ligand>
        <name>ATP</name>
        <dbReference type="ChEBI" id="CHEBI:30616"/>
    </ligand>
</feature>
<protein>
    <recommendedName>
        <fullName>Probable thymidylate kinase</fullName>
        <ecNumber>2.7.4.9</ecNumber>
    </recommendedName>
    <alternativeName>
        <fullName>dTMP kinase</fullName>
    </alternativeName>
</protein>